<comment type="function">
    <text evidence="2">Component of the ubiquinol-cytochrome c reductase complex (complex III or cytochrome b-c1 complex) that is part of the mitochondrial respiratory chain. The b-c1 complex mediates electron transfer from ubiquinol to cytochrome c. Contributes to the generation of a proton gradient across the mitochondrial membrane that is then used for ATP synthesis.</text>
</comment>
<comment type="cofactor">
    <cofactor evidence="2">
        <name>heme b</name>
        <dbReference type="ChEBI" id="CHEBI:60344"/>
    </cofactor>
    <text evidence="2">Binds 2 heme b groups non-covalently.</text>
</comment>
<comment type="subunit">
    <text evidence="2">The cytochrome bc1 complex contains 11 subunits: 3 respiratory subunits (MT-CYB, CYC1 and UQCRFS1), 2 core proteins (UQCRC1 and UQCRC2) and 6 low-molecular weight proteins (UQCRH/QCR6, UQCRB/QCR7, UQCRQ/QCR8, UQCR10/QCR9, UQCR11/QCR10 and a cleavage product of UQCRFS1). This cytochrome bc1 complex then forms a dimer.</text>
</comment>
<comment type="subcellular location">
    <subcellularLocation>
        <location evidence="2">Mitochondrion inner membrane</location>
        <topology evidence="2">Multi-pass membrane protein</topology>
    </subcellularLocation>
</comment>
<comment type="miscellaneous">
    <text evidence="1">Heme 1 (or BL or b562) is low-potential and absorbs at about 562 nm, and heme 2 (or BH or b566) is high-potential and absorbs at about 566 nm.</text>
</comment>
<comment type="similarity">
    <text evidence="3 4">Belongs to the cytochrome b family.</text>
</comment>
<comment type="caution">
    <text evidence="2">The full-length protein contains only eight transmembrane helices, not nine as predicted by bioinformatics tools.</text>
</comment>
<name>CYB_MONDO</name>
<organism>
    <name type="scientific">Monodelphis domestica</name>
    <name type="common">Gray short-tailed opossum</name>
    <dbReference type="NCBI Taxonomy" id="13616"/>
    <lineage>
        <taxon>Eukaryota</taxon>
        <taxon>Metazoa</taxon>
        <taxon>Chordata</taxon>
        <taxon>Craniata</taxon>
        <taxon>Vertebrata</taxon>
        <taxon>Euteleostomi</taxon>
        <taxon>Mammalia</taxon>
        <taxon>Metatheria</taxon>
        <taxon>Didelphimorphia</taxon>
        <taxon>Didelphidae</taxon>
        <taxon>Monodelphis</taxon>
    </lineage>
</organism>
<proteinExistence type="inferred from homology"/>
<dbReference type="EMBL" id="X70673">
    <property type="protein sequence ID" value="CAA50009.1"/>
    <property type="molecule type" value="Genomic_DNA"/>
</dbReference>
<dbReference type="PIR" id="S33573">
    <property type="entry name" value="S33573"/>
</dbReference>
<dbReference type="SMR" id="Q04911"/>
<dbReference type="FunCoup" id="Q04911">
    <property type="interactions" value="146"/>
</dbReference>
<dbReference type="STRING" id="13616.ENSMODP00000026943"/>
<dbReference type="eggNOG" id="KOG4663">
    <property type="taxonomic scope" value="Eukaryota"/>
</dbReference>
<dbReference type="InParanoid" id="Q04911"/>
<dbReference type="Proteomes" id="UP000002280">
    <property type="component" value="Mitochondrion"/>
</dbReference>
<dbReference type="GO" id="GO:0016020">
    <property type="term" value="C:membrane"/>
    <property type="evidence" value="ECO:0000318"/>
    <property type="project" value="GO_Central"/>
</dbReference>
<dbReference type="GO" id="GO:0005743">
    <property type="term" value="C:mitochondrial inner membrane"/>
    <property type="evidence" value="ECO:0007669"/>
    <property type="project" value="UniProtKB-SubCell"/>
</dbReference>
<dbReference type="GO" id="GO:0045275">
    <property type="term" value="C:respiratory chain complex III"/>
    <property type="evidence" value="ECO:0000318"/>
    <property type="project" value="GO_Central"/>
</dbReference>
<dbReference type="GO" id="GO:0046872">
    <property type="term" value="F:metal ion binding"/>
    <property type="evidence" value="ECO:0007669"/>
    <property type="project" value="UniProtKB-KW"/>
</dbReference>
<dbReference type="GO" id="GO:0008121">
    <property type="term" value="F:ubiquinol-cytochrome-c reductase activity"/>
    <property type="evidence" value="ECO:0007669"/>
    <property type="project" value="InterPro"/>
</dbReference>
<dbReference type="GO" id="GO:0006122">
    <property type="term" value="P:mitochondrial electron transport, ubiquinol to cytochrome c"/>
    <property type="evidence" value="ECO:0000318"/>
    <property type="project" value="GO_Central"/>
</dbReference>
<dbReference type="CDD" id="cd00290">
    <property type="entry name" value="cytochrome_b_C"/>
    <property type="match status" value="1"/>
</dbReference>
<dbReference type="CDD" id="cd00284">
    <property type="entry name" value="Cytochrome_b_N"/>
    <property type="match status" value="1"/>
</dbReference>
<dbReference type="FunFam" id="1.20.810.10:FF:000002">
    <property type="entry name" value="Cytochrome b"/>
    <property type="match status" value="1"/>
</dbReference>
<dbReference type="Gene3D" id="1.20.810.10">
    <property type="entry name" value="Cytochrome Bc1 Complex, Chain C"/>
    <property type="match status" value="1"/>
</dbReference>
<dbReference type="InterPro" id="IPR005798">
    <property type="entry name" value="Cyt_b/b6_C"/>
</dbReference>
<dbReference type="InterPro" id="IPR036150">
    <property type="entry name" value="Cyt_b/b6_C_sf"/>
</dbReference>
<dbReference type="InterPro" id="IPR005797">
    <property type="entry name" value="Cyt_b/b6_N"/>
</dbReference>
<dbReference type="InterPro" id="IPR027387">
    <property type="entry name" value="Cytb/b6-like_sf"/>
</dbReference>
<dbReference type="InterPro" id="IPR030689">
    <property type="entry name" value="Cytochrome_b"/>
</dbReference>
<dbReference type="InterPro" id="IPR048260">
    <property type="entry name" value="Cytochrome_b_C_euk/bac"/>
</dbReference>
<dbReference type="InterPro" id="IPR048259">
    <property type="entry name" value="Cytochrome_b_N_euk/bac"/>
</dbReference>
<dbReference type="InterPro" id="IPR016174">
    <property type="entry name" value="Di-haem_cyt_TM"/>
</dbReference>
<dbReference type="PANTHER" id="PTHR19271">
    <property type="entry name" value="CYTOCHROME B"/>
    <property type="match status" value="1"/>
</dbReference>
<dbReference type="PANTHER" id="PTHR19271:SF16">
    <property type="entry name" value="CYTOCHROME B"/>
    <property type="match status" value="1"/>
</dbReference>
<dbReference type="Pfam" id="PF00032">
    <property type="entry name" value="Cytochrom_B_C"/>
    <property type="match status" value="1"/>
</dbReference>
<dbReference type="Pfam" id="PF00033">
    <property type="entry name" value="Cytochrome_B"/>
    <property type="match status" value="1"/>
</dbReference>
<dbReference type="PIRSF" id="PIRSF038885">
    <property type="entry name" value="COB"/>
    <property type="match status" value="1"/>
</dbReference>
<dbReference type="SUPFAM" id="SSF81648">
    <property type="entry name" value="a domain/subunit of cytochrome bc1 complex (Ubiquinol-cytochrome c reductase)"/>
    <property type="match status" value="1"/>
</dbReference>
<dbReference type="SUPFAM" id="SSF81342">
    <property type="entry name" value="Transmembrane di-heme cytochromes"/>
    <property type="match status" value="1"/>
</dbReference>
<dbReference type="PROSITE" id="PS51003">
    <property type="entry name" value="CYTB_CTER"/>
    <property type="match status" value="1"/>
</dbReference>
<dbReference type="PROSITE" id="PS51002">
    <property type="entry name" value="CYTB_NTER"/>
    <property type="match status" value="1"/>
</dbReference>
<reference key="1">
    <citation type="journal article" date="1993" name="J. Mol. Evol.">
        <title>Structure and evolution of opossum, guinea pig, and porcupine cytochrome b genes.</title>
        <authorList>
            <person name="Ma D.P."/>
            <person name="Zharkikh A."/>
            <person name="Graur D."/>
            <person name="Vandeberg J.L."/>
            <person name="Li W.H."/>
        </authorList>
    </citation>
    <scope>NUCLEOTIDE SEQUENCE [GENOMIC DNA]</scope>
</reference>
<geneLocation type="mitochondrion"/>
<accession>Q04911</accession>
<keyword id="KW-0249">Electron transport</keyword>
<keyword id="KW-0349">Heme</keyword>
<keyword id="KW-0408">Iron</keyword>
<keyword id="KW-0472">Membrane</keyword>
<keyword id="KW-0479">Metal-binding</keyword>
<keyword id="KW-0496">Mitochondrion</keyword>
<keyword id="KW-0999">Mitochondrion inner membrane</keyword>
<keyword id="KW-1185">Reference proteome</keyword>
<keyword id="KW-0679">Respiratory chain</keyword>
<keyword id="KW-0812">Transmembrane</keyword>
<keyword id="KW-1133">Transmembrane helix</keyword>
<keyword id="KW-0813">Transport</keyword>
<keyword id="KW-0830">Ubiquinone</keyword>
<feature type="chain" id="PRO_0000061200" description="Cytochrome b">
    <location>
        <begin position="1"/>
        <end position="382"/>
    </location>
</feature>
<feature type="transmembrane region" description="Helical" evidence="2">
    <location>
        <begin position="33"/>
        <end position="53"/>
    </location>
</feature>
<feature type="transmembrane region" description="Helical" evidence="2">
    <location>
        <begin position="77"/>
        <end position="98"/>
    </location>
</feature>
<feature type="transmembrane region" description="Helical" evidence="2">
    <location>
        <begin position="113"/>
        <end position="133"/>
    </location>
</feature>
<feature type="transmembrane region" description="Helical" evidence="2">
    <location>
        <begin position="178"/>
        <end position="198"/>
    </location>
</feature>
<feature type="transmembrane region" description="Helical" evidence="2">
    <location>
        <begin position="226"/>
        <end position="246"/>
    </location>
</feature>
<feature type="transmembrane region" description="Helical" evidence="2">
    <location>
        <begin position="288"/>
        <end position="308"/>
    </location>
</feature>
<feature type="transmembrane region" description="Helical" evidence="2">
    <location>
        <begin position="320"/>
        <end position="340"/>
    </location>
</feature>
<feature type="transmembrane region" description="Helical" evidence="2">
    <location>
        <begin position="347"/>
        <end position="367"/>
    </location>
</feature>
<feature type="binding site" description="axial binding residue" evidence="2">
    <location>
        <position position="83"/>
    </location>
    <ligand>
        <name>heme b</name>
        <dbReference type="ChEBI" id="CHEBI:60344"/>
        <label>b562</label>
    </ligand>
    <ligandPart>
        <name>Fe</name>
        <dbReference type="ChEBI" id="CHEBI:18248"/>
    </ligandPart>
</feature>
<feature type="binding site" description="axial binding residue" evidence="2">
    <location>
        <position position="97"/>
    </location>
    <ligand>
        <name>heme b</name>
        <dbReference type="ChEBI" id="CHEBI:60344"/>
        <label>b566</label>
    </ligand>
    <ligandPart>
        <name>Fe</name>
        <dbReference type="ChEBI" id="CHEBI:18248"/>
    </ligandPart>
</feature>
<feature type="binding site" description="axial binding residue" evidence="2">
    <location>
        <position position="182"/>
    </location>
    <ligand>
        <name>heme b</name>
        <dbReference type="ChEBI" id="CHEBI:60344"/>
        <label>b562</label>
    </ligand>
    <ligandPart>
        <name>Fe</name>
        <dbReference type="ChEBI" id="CHEBI:18248"/>
    </ligandPart>
</feature>
<feature type="binding site" description="axial binding residue" evidence="2">
    <location>
        <position position="196"/>
    </location>
    <ligand>
        <name>heme b</name>
        <dbReference type="ChEBI" id="CHEBI:60344"/>
        <label>b566</label>
    </ligand>
    <ligandPart>
        <name>Fe</name>
        <dbReference type="ChEBI" id="CHEBI:18248"/>
    </ligandPart>
</feature>
<feature type="binding site" evidence="2">
    <location>
        <position position="201"/>
    </location>
    <ligand>
        <name>a ubiquinone</name>
        <dbReference type="ChEBI" id="CHEBI:16389"/>
    </ligand>
</feature>
<gene>
    <name type="primary">MT-CYB</name>
    <name type="synonym">COB</name>
    <name type="synonym">CYTB</name>
    <name type="synonym">MTCYB</name>
</gene>
<protein>
    <recommendedName>
        <fullName>Cytochrome b</fullName>
    </recommendedName>
    <alternativeName>
        <fullName>Complex III subunit 3</fullName>
    </alternativeName>
    <alternativeName>
        <fullName>Complex III subunit III</fullName>
    </alternativeName>
    <alternativeName>
        <fullName>Cytochrome b-c1 complex subunit 3</fullName>
    </alternativeName>
    <alternativeName>
        <fullName>Ubiquinol-cytochrome-c reductase complex cytochrome b subunit</fullName>
    </alternativeName>
</protein>
<sequence>MTNLRKNYPLMKIINHSFIDLPAPSNISAWWNFGSLLGMCLIIQILTGLFLAMHYTSDTLTAFSSVAHICRDVNYGWLIRNLHANGASMFFMCLFLHVGRGIYYGSYLYKETWNIGVILMLTVMATAFVGYVLPWGQMSFWGATVITNLLSAIPYIGNTLVEWIWGGFSVDKATLTRFFAFHFILPFIILALVIVHLLFLHETGSNNPTGINPNSDKIPFHPYYTIKDALGLILMLLILMSLAMFSPDMLGNPDNFTPANPLNTPPHIKPEWYFLFAYAILRSIPNKLGGVLALLASLLILLIIPLLHTSKQRSLMFRPISQIMFWLLVANLLTLTWIGGQPVEQPFIIIGQLASTLYFSLIIIFMPLAGMYEDHLLEPKFP</sequence>
<evidence type="ECO:0000250" key="1"/>
<evidence type="ECO:0000250" key="2">
    <source>
        <dbReference type="UniProtKB" id="P00157"/>
    </source>
</evidence>
<evidence type="ECO:0000255" key="3">
    <source>
        <dbReference type="PROSITE-ProRule" id="PRU00967"/>
    </source>
</evidence>
<evidence type="ECO:0000255" key="4">
    <source>
        <dbReference type="PROSITE-ProRule" id="PRU00968"/>
    </source>
</evidence>